<feature type="chain" id="PRO_0000083599" description="3-isopropylmalate dehydrogenase A">
    <location>
        <begin position="1"/>
        <end position="363"/>
    </location>
</feature>
<feature type="binding site" evidence="1">
    <location>
        <begin position="78"/>
        <end position="89"/>
    </location>
    <ligand>
        <name>NAD(+)</name>
        <dbReference type="ChEBI" id="CHEBI:57540"/>
    </ligand>
</feature>
<feature type="binding site" evidence="1">
    <location>
        <position position="96"/>
    </location>
    <ligand>
        <name>substrate</name>
    </ligand>
</feature>
<feature type="binding site" evidence="1">
    <location>
        <position position="106"/>
    </location>
    <ligand>
        <name>substrate</name>
    </ligand>
</feature>
<feature type="binding site" evidence="1">
    <location>
        <position position="135"/>
    </location>
    <ligand>
        <name>substrate</name>
    </ligand>
</feature>
<feature type="binding site" evidence="1">
    <location>
        <position position="222"/>
    </location>
    <ligand>
        <name>Mg(2+)</name>
        <dbReference type="ChEBI" id="CHEBI:18420"/>
    </ligand>
</feature>
<feature type="binding site" evidence="1">
    <location>
        <position position="222"/>
    </location>
    <ligand>
        <name>substrate</name>
    </ligand>
</feature>
<feature type="binding site" evidence="1">
    <location>
        <position position="247"/>
    </location>
    <ligand>
        <name>Mg(2+)</name>
        <dbReference type="ChEBI" id="CHEBI:18420"/>
    </ligand>
</feature>
<feature type="binding site" evidence="1">
    <location>
        <position position="251"/>
    </location>
    <ligand>
        <name>Mg(2+)</name>
        <dbReference type="ChEBI" id="CHEBI:18420"/>
    </ligand>
</feature>
<feature type="binding site" evidence="1">
    <location>
        <begin position="287"/>
        <end position="299"/>
    </location>
    <ligand>
        <name>NAD(+)</name>
        <dbReference type="ChEBI" id="CHEBI:57540"/>
    </ligand>
</feature>
<feature type="site" description="Important for catalysis" evidence="1">
    <location>
        <position position="142"/>
    </location>
</feature>
<feature type="site" description="Important for catalysis" evidence="1">
    <location>
        <position position="189"/>
    </location>
</feature>
<keyword id="KW-0028">Amino-acid biosynthesis</keyword>
<keyword id="KW-0100">Branched-chain amino acid biosynthesis</keyword>
<keyword id="KW-0963">Cytoplasm</keyword>
<keyword id="KW-0432">Leucine biosynthesis</keyword>
<keyword id="KW-0460">Magnesium</keyword>
<keyword id="KW-0464">Manganese</keyword>
<keyword id="KW-0479">Metal-binding</keyword>
<keyword id="KW-0520">NAD</keyword>
<keyword id="KW-0560">Oxidoreductase</keyword>
<organism>
    <name type="scientific">Aspergillus niger</name>
    <dbReference type="NCBI Taxonomy" id="5061"/>
    <lineage>
        <taxon>Eukaryota</taxon>
        <taxon>Fungi</taxon>
        <taxon>Dikarya</taxon>
        <taxon>Ascomycota</taxon>
        <taxon>Pezizomycotina</taxon>
        <taxon>Eurotiomycetes</taxon>
        <taxon>Eurotiomycetidae</taxon>
        <taxon>Eurotiales</taxon>
        <taxon>Aspergillaceae</taxon>
        <taxon>Aspergillus</taxon>
        <taxon>Aspergillus subgen. Circumdati</taxon>
    </lineage>
</organism>
<sequence length="363" mass="38670">MPAYNIVVFAGDHWGPEVTAEAIKVLRVIEKSRDDITLNLQDHLLGGASIDATANPLTDEALAAAKNADAVLLGAIGGPKWGTGAVRPEQGLLNVRKEMGTFGNLRPCNFAAPSLVEHSPLKASVCEGVDFNIIRELTGGIYFGDRKKMTAAATMDTEPYSRAEIERITPRAHLALQHNPPLPVWSLDKANVLATSRLWRKTVTEIMAKEFPQLKIEHQLIDSAAMIMVKNPRQLNGIIVTSNLFGDIISDEASVIPGSLGLLPSASLSGIPDGKGRVNGIYEPIHGSAPDIAGKGIVNPVAAILSVAMMMQYSFGRFDEARAIEAAVRNVLESGVRTGDIGGKATTSEVGDAVAAELEKLLK</sequence>
<evidence type="ECO:0000250" key="1"/>
<evidence type="ECO:0000305" key="2"/>
<gene>
    <name type="primary">leu2A</name>
</gene>
<reference key="1">
    <citation type="journal article" date="1996" name="Curr. Genet.">
        <title>Isolation by genetic complementation of two differentially expressed genes for beta-isopropylmalate dehydrogenase from Aspergillus niger.</title>
        <authorList>
            <person name="Williams B.A."/>
            <person name="Sillaots S."/>
            <person name="Tsang A."/>
            <person name="Storms R."/>
        </authorList>
    </citation>
    <scope>NUCLEOTIDE SEQUENCE [MRNA]</scope>
    <source>
        <strain>A733</strain>
    </source>
</reference>
<accession>P87256</accession>
<protein>
    <recommendedName>
        <fullName>3-isopropylmalate dehydrogenase A</fullName>
        <shortName>3-IPM-DH A</shortName>
        <shortName>IMDH A</shortName>
        <ecNumber>1.1.1.85</ecNumber>
    </recommendedName>
    <alternativeName>
        <fullName>Beta-IPM dehydrogenase A</fullName>
    </alternativeName>
</protein>
<dbReference type="EC" id="1.1.1.85"/>
<dbReference type="EMBL" id="S83228">
    <property type="protein sequence ID" value="AAB50827.1"/>
    <property type="molecule type" value="mRNA"/>
</dbReference>
<dbReference type="EMBL" id="U51130">
    <property type="protein sequence ID" value="AAD10278.1"/>
    <property type="molecule type" value="mRNA"/>
</dbReference>
<dbReference type="PIR" id="S72209">
    <property type="entry name" value="S72209"/>
</dbReference>
<dbReference type="SMR" id="P87256"/>
<dbReference type="PaxDb" id="5061-CADANGAP00001364"/>
<dbReference type="VEuPathDB" id="FungiDB:An01g14130"/>
<dbReference type="VEuPathDB" id="FungiDB:ASPNIDRAFT2_1118079"/>
<dbReference type="VEuPathDB" id="FungiDB:ATCC64974_12090"/>
<dbReference type="VEuPathDB" id="FungiDB:M747DRAFT_262474"/>
<dbReference type="eggNOG" id="KOG0786">
    <property type="taxonomic scope" value="Eukaryota"/>
</dbReference>
<dbReference type="BRENDA" id="1.1.1.85">
    <property type="organism ID" value="518"/>
</dbReference>
<dbReference type="UniPathway" id="UPA00048">
    <property type="reaction ID" value="UER00072"/>
</dbReference>
<dbReference type="GO" id="GO:0005829">
    <property type="term" value="C:cytosol"/>
    <property type="evidence" value="ECO:0007669"/>
    <property type="project" value="TreeGrafter"/>
</dbReference>
<dbReference type="GO" id="GO:0003862">
    <property type="term" value="F:3-isopropylmalate dehydrogenase activity"/>
    <property type="evidence" value="ECO:0007669"/>
    <property type="project" value="UniProtKB-EC"/>
</dbReference>
<dbReference type="GO" id="GO:0000287">
    <property type="term" value="F:magnesium ion binding"/>
    <property type="evidence" value="ECO:0007669"/>
    <property type="project" value="InterPro"/>
</dbReference>
<dbReference type="GO" id="GO:0051287">
    <property type="term" value="F:NAD binding"/>
    <property type="evidence" value="ECO:0007669"/>
    <property type="project" value="InterPro"/>
</dbReference>
<dbReference type="GO" id="GO:0009098">
    <property type="term" value="P:L-leucine biosynthetic process"/>
    <property type="evidence" value="ECO:0007669"/>
    <property type="project" value="UniProtKB-UniPathway"/>
</dbReference>
<dbReference type="FunFam" id="3.40.718.10:FF:000006">
    <property type="entry name" value="3-isopropylmalate dehydrogenase"/>
    <property type="match status" value="1"/>
</dbReference>
<dbReference type="Gene3D" id="3.40.718.10">
    <property type="entry name" value="Isopropylmalate Dehydrogenase"/>
    <property type="match status" value="1"/>
</dbReference>
<dbReference type="InterPro" id="IPR019818">
    <property type="entry name" value="IsoCit/isopropylmalate_DH_CS"/>
</dbReference>
<dbReference type="InterPro" id="IPR024084">
    <property type="entry name" value="IsoPropMal-DH-like_dom"/>
</dbReference>
<dbReference type="InterPro" id="IPR004429">
    <property type="entry name" value="Isopropylmalate_DH"/>
</dbReference>
<dbReference type="NCBIfam" id="TIGR00169">
    <property type="entry name" value="leuB"/>
    <property type="match status" value="1"/>
</dbReference>
<dbReference type="PANTHER" id="PTHR42979">
    <property type="entry name" value="3-ISOPROPYLMALATE DEHYDROGENASE"/>
    <property type="match status" value="1"/>
</dbReference>
<dbReference type="PANTHER" id="PTHR42979:SF1">
    <property type="entry name" value="3-ISOPROPYLMALATE DEHYDROGENASE"/>
    <property type="match status" value="1"/>
</dbReference>
<dbReference type="Pfam" id="PF00180">
    <property type="entry name" value="Iso_dh"/>
    <property type="match status" value="1"/>
</dbReference>
<dbReference type="SMART" id="SM01329">
    <property type="entry name" value="Iso_dh"/>
    <property type="match status" value="1"/>
</dbReference>
<dbReference type="SUPFAM" id="SSF53659">
    <property type="entry name" value="Isocitrate/Isopropylmalate dehydrogenase-like"/>
    <property type="match status" value="1"/>
</dbReference>
<dbReference type="PROSITE" id="PS00470">
    <property type="entry name" value="IDH_IMDH"/>
    <property type="match status" value="1"/>
</dbReference>
<comment type="function">
    <text>Catalyzes the oxidation of 3-carboxy-2-hydroxy-4-methylpentanoate (3-isopropylmalate) to 3-carboxy-4-methyl-2-oxopentanoate. The product decarboxylates to 4-methyl-2 oxopentanoate.</text>
</comment>
<comment type="catalytic activity">
    <reaction>
        <text>(2R,3S)-3-isopropylmalate + NAD(+) = 4-methyl-2-oxopentanoate + CO2 + NADH</text>
        <dbReference type="Rhea" id="RHEA:32271"/>
        <dbReference type="ChEBI" id="CHEBI:16526"/>
        <dbReference type="ChEBI" id="CHEBI:17865"/>
        <dbReference type="ChEBI" id="CHEBI:35121"/>
        <dbReference type="ChEBI" id="CHEBI:57540"/>
        <dbReference type="ChEBI" id="CHEBI:57945"/>
        <dbReference type="EC" id="1.1.1.85"/>
    </reaction>
</comment>
<comment type="cofactor">
    <cofactor evidence="1">
        <name>Mg(2+)</name>
        <dbReference type="ChEBI" id="CHEBI:18420"/>
    </cofactor>
    <cofactor evidence="1">
        <name>Mn(2+)</name>
        <dbReference type="ChEBI" id="CHEBI:29035"/>
    </cofactor>
    <text evidence="1">Binds 1 Mg(2+) or Mn(2+) ion per subunit.</text>
</comment>
<comment type="pathway">
    <text>Amino-acid biosynthesis; L-leucine biosynthesis; L-leucine from 3-methyl-2-oxobutanoate: step 3/4.</text>
</comment>
<comment type="subunit">
    <text evidence="1">Homodimer.</text>
</comment>
<comment type="subcellular location">
    <subcellularLocation>
        <location>Cytoplasm</location>
    </subcellularLocation>
</comment>
<comment type="similarity">
    <text evidence="2">Belongs to the isocitrate and isopropylmalate dehydrogenases family.</text>
</comment>
<proteinExistence type="evidence at transcript level"/>
<name>LEU3A_ASPNG</name>